<sequence>MTIIVTGAAGFIGSNIVKALNQRGITDIVAVDNLSKGEKFKNLAECEIAHYLDKHEFIRQVREHILPYQNIEAVFHQGACSDTMNYDGLYMMDNNYQYTLDLLDWCQDERIPFLYASSAAVYGKGEIFREERELEKPLNVYGYSKFLFDQVLRRRMKEGLTAQVVGFRYFNVYGQHEQHKGRMASVAFHHFHQYREHGYVNLFGSNDGYGNGEQTRDFVSVEDVAKVNLYFFDHPELSGIYNLGTGRSQQFNELAAATVNACRAAEGKPEMSLKELVEEELIRYIPFPNALKGKYQSFTQADITKLREAGYKEEFFDVKAGIDRYVKWMLENLA</sequence>
<accession>Q9JQX8</accession>
<accession>A1IR73</accession>
<keyword id="KW-0119">Carbohydrate metabolism</keyword>
<keyword id="KW-0413">Isomerase</keyword>
<keyword id="KW-0521">NADP</keyword>
<organism>
    <name type="scientific">Neisseria meningitidis serogroup A / serotype 4A (strain DSM 15465 / Z2491)</name>
    <dbReference type="NCBI Taxonomy" id="122587"/>
    <lineage>
        <taxon>Bacteria</taxon>
        <taxon>Pseudomonadati</taxon>
        <taxon>Pseudomonadota</taxon>
        <taxon>Betaproteobacteria</taxon>
        <taxon>Neisseriales</taxon>
        <taxon>Neisseriaceae</taxon>
        <taxon>Neisseria</taxon>
    </lineage>
</organism>
<feature type="chain" id="PRO_0000205801" description="ADP-L-glycero-D-manno-heptose-6-epimerase">
    <location>
        <begin position="1"/>
        <end position="334"/>
    </location>
</feature>
<feature type="active site" description="Proton acceptor" evidence="1">
    <location>
        <position position="141"/>
    </location>
</feature>
<feature type="active site" description="Proton acceptor" evidence="1">
    <location>
        <position position="180"/>
    </location>
</feature>
<feature type="binding site" evidence="1">
    <location>
        <begin position="11"/>
        <end position="12"/>
    </location>
    <ligand>
        <name>NADP(+)</name>
        <dbReference type="ChEBI" id="CHEBI:58349"/>
    </ligand>
</feature>
<feature type="binding site" evidence="1">
    <location>
        <begin position="32"/>
        <end position="33"/>
    </location>
    <ligand>
        <name>NADP(+)</name>
        <dbReference type="ChEBI" id="CHEBI:58349"/>
    </ligand>
</feature>
<feature type="binding site" evidence="1">
    <location>
        <position position="39"/>
    </location>
    <ligand>
        <name>NADP(+)</name>
        <dbReference type="ChEBI" id="CHEBI:58349"/>
    </ligand>
</feature>
<feature type="binding site" evidence="1">
    <location>
        <position position="54"/>
    </location>
    <ligand>
        <name>NADP(+)</name>
        <dbReference type="ChEBI" id="CHEBI:58349"/>
    </ligand>
</feature>
<feature type="binding site" evidence="1">
    <location>
        <begin position="77"/>
        <end position="81"/>
    </location>
    <ligand>
        <name>NADP(+)</name>
        <dbReference type="ChEBI" id="CHEBI:58349"/>
    </ligand>
</feature>
<feature type="binding site" evidence="1">
    <location>
        <position position="94"/>
    </location>
    <ligand>
        <name>NADP(+)</name>
        <dbReference type="ChEBI" id="CHEBI:58349"/>
    </ligand>
</feature>
<feature type="binding site" evidence="1">
    <location>
        <position position="145"/>
    </location>
    <ligand>
        <name>NADP(+)</name>
        <dbReference type="ChEBI" id="CHEBI:58349"/>
    </ligand>
</feature>
<feature type="binding site" evidence="1">
    <location>
        <position position="171"/>
    </location>
    <ligand>
        <name>substrate</name>
    </ligand>
</feature>
<feature type="binding site" evidence="1">
    <location>
        <position position="172"/>
    </location>
    <ligand>
        <name>NADP(+)</name>
        <dbReference type="ChEBI" id="CHEBI:58349"/>
    </ligand>
</feature>
<feature type="binding site" evidence="1">
    <location>
        <position position="180"/>
    </location>
    <ligand>
        <name>NADP(+)</name>
        <dbReference type="ChEBI" id="CHEBI:58349"/>
    </ligand>
</feature>
<feature type="binding site" evidence="1">
    <location>
        <position position="182"/>
    </location>
    <ligand>
        <name>substrate</name>
    </ligand>
</feature>
<feature type="binding site" evidence="1">
    <location>
        <position position="189"/>
    </location>
    <ligand>
        <name>substrate</name>
    </ligand>
</feature>
<feature type="binding site" evidence="1">
    <location>
        <begin position="203"/>
        <end position="206"/>
    </location>
    <ligand>
        <name>substrate</name>
    </ligand>
</feature>
<feature type="binding site" evidence="1">
    <location>
        <position position="216"/>
    </location>
    <ligand>
        <name>substrate</name>
    </ligand>
</feature>
<feature type="binding site" evidence="1">
    <location>
        <position position="295"/>
    </location>
    <ligand>
        <name>substrate</name>
    </ligand>
</feature>
<dbReference type="EC" id="5.1.3.20" evidence="1"/>
<dbReference type="EMBL" id="AL157959">
    <property type="protein sequence ID" value="CAM08257.1"/>
    <property type="molecule type" value="Genomic_DNA"/>
</dbReference>
<dbReference type="PIR" id="C81952">
    <property type="entry name" value="C81952"/>
</dbReference>
<dbReference type="RefSeq" id="WP_002249833.1">
    <property type="nucleotide sequence ID" value="NC_003116.1"/>
</dbReference>
<dbReference type="SMR" id="Q9JQX8"/>
<dbReference type="EnsemblBacteria" id="CAM08257">
    <property type="protein sequence ID" value="CAM08257"/>
    <property type="gene ID" value="NMA1037"/>
</dbReference>
<dbReference type="KEGG" id="nma:NMA1037"/>
<dbReference type="HOGENOM" id="CLU_007383_1_3_4"/>
<dbReference type="UniPathway" id="UPA00356">
    <property type="reaction ID" value="UER00440"/>
</dbReference>
<dbReference type="UniPathway" id="UPA00976"/>
<dbReference type="Proteomes" id="UP000000626">
    <property type="component" value="Chromosome"/>
</dbReference>
<dbReference type="GO" id="GO:0008712">
    <property type="term" value="F:ADP-glyceromanno-heptose 6-epimerase activity"/>
    <property type="evidence" value="ECO:0007669"/>
    <property type="project" value="UniProtKB-UniRule"/>
</dbReference>
<dbReference type="GO" id="GO:0050661">
    <property type="term" value="F:NADP binding"/>
    <property type="evidence" value="ECO:0007669"/>
    <property type="project" value="InterPro"/>
</dbReference>
<dbReference type="GO" id="GO:0097171">
    <property type="term" value="P:ADP-L-glycero-beta-D-manno-heptose biosynthetic process"/>
    <property type="evidence" value="ECO:0007669"/>
    <property type="project" value="UniProtKB-UniPathway"/>
</dbReference>
<dbReference type="GO" id="GO:0005975">
    <property type="term" value="P:carbohydrate metabolic process"/>
    <property type="evidence" value="ECO:0007669"/>
    <property type="project" value="UniProtKB-UniRule"/>
</dbReference>
<dbReference type="CDD" id="cd05248">
    <property type="entry name" value="ADP_GME_SDR_e"/>
    <property type="match status" value="1"/>
</dbReference>
<dbReference type="Gene3D" id="3.40.50.720">
    <property type="entry name" value="NAD(P)-binding Rossmann-like Domain"/>
    <property type="match status" value="1"/>
</dbReference>
<dbReference type="Gene3D" id="3.90.25.10">
    <property type="entry name" value="UDP-galactose 4-epimerase, domain 1"/>
    <property type="match status" value="1"/>
</dbReference>
<dbReference type="HAMAP" id="MF_01601">
    <property type="entry name" value="Heptose_epimerase"/>
    <property type="match status" value="1"/>
</dbReference>
<dbReference type="InterPro" id="IPR001509">
    <property type="entry name" value="Epimerase_deHydtase"/>
</dbReference>
<dbReference type="InterPro" id="IPR011912">
    <property type="entry name" value="Heptose_epim"/>
</dbReference>
<dbReference type="InterPro" id="IPR036291">
    <property type="entry name" value="NAD(P)-bd_dom_sf"/>
</dbReference>
<dbReference type="NCBIfam" id="TIGR02197">
    <property type="entry name" value="heptose_epim"/>
    <property type="match status" value="1"/>
</dbReference>
<dbReference type="PANTHER" id="PTHR43103:SF3">
    <property type="entry name" value="ADP-L-GLYCERO-D-MANNO-HEPTOSE-6-EPIMERASE"/>
    <property type="match status" value="1"/>
</dbReference>
<dbReference type="PANTHER" id="PTHR43103">
    <property type="entry name" value="NUCLEOSIDE-DIPHOSPHATE-SUGAR EPIMERASE"/>
    <property type="match status" value="1"/>
</dbReference>
<dbReference type="Pfam" id="PF01370">
    <property type="entry name" value="Epimerase"/>
    <property type="match status" value="1"/>
</dbReference>
<dbReference type="SUPFAM" id="SSF51735">
    <property type="entry name" value="NAD(P)-binding Rossmann-fold domains"/>
    <property type="match status" value="1"/>
</dbReference>
<comment type="function">
    <text evidence="1">Catalyzes the interconversion between ADP-D-glycero-beta-D-manno-heptose and ADP-L-glycero-beta-D-manno-heptose via an epimerization at carbon 6 of the heptose.</text>
</comment>
<comment type="catalytic activity">
    <reaction evidence="1">
        <text>ADP-D-glycero-beta-D-manno-heptose = ADP-L-glycero-beta-D-manno-heptose</text>
        <dbReference type="Rhea" id="RHEA:17577"/>
        <dbReference type="ChEBI" id="CHEBI:59967"/>
        <dbReference type="ChEBI" id="CHEBI:61506"/>
        <dbReference type="EC" id="5.1.3.20"/>
    </reaction>
</comment>
<comment type="cofactor">
    <cofactor evidence="1">
        <name>NADP(+)</name>
        <dbReference type="ChEBI" id="CHEBI:58349"/>
    </cofactor>
    <text evidence="1">Binds 1 NADP(+) per subunit.</text>
</comment>
<comment type="pathway">
    <text evidence="1">Nucleotide-sugar biosynthesis; ADP-L-glycero-beta-D-manno-heptose biosynthesis; ADP-L-glycero-beta-D-manno-heptose from D-glycero-beta-D-manno-heptose 7-phosphate: step 4/4.</text>
</comment>
<comment type="pathway">
    <text>Bacterial outer membrane biogenesis; LOS core biosynthesis.</text>
</comment>
<comment type="subunit">
    <text evidence="1">Homopentamer.</text>
</comment>
<comment type="domain">
    <text evidence="1">Contains a large N-terminal NADP-binding domain, and a smaller C-terminal substrate-binding domain.</text>
</comment>
<comment type="similarity">
    <text evidence="1">Belongs to the NAD(P)-dependent epimerase/dehydratase family. HldD subfamily.</text>
</comment>
<gene>
    <name evidence="1" type="primary">hldD</name>
    <name type="synonym">rfaD</name>
    <name type="ordered locus">NMA1037</name>
</gene>
<protein>
    <recommendedName>
        <fullName evidence="1">ADP-L-glycero-D-manno-heptose-6-epimerase</fullName>
        <ecNumber evidence="1">5.1.3.20</ecNumber>
    </recommendedName>
    <alternativeName>
        <fullName evidence="1">ADP-L-glycero-beta-D-manno-heptose-6-epimerase</fullName>
        <shortName evidence="1">ADP-glyceromanno-heptose 6-epimerase</shortName>
        <shortName evidence="1">ADP-hep 6-epimerase</shortName>
        <shortName evidence="1">AGME</shortName>
    </alternativeName>
</protein>
<reference key="1">
    <citation type="journal article" date="2000" name="Nature">
        <title>Complete DNA sequence of a serogroup A strain of Neisseria meningitidis Z2491.</title>
        <authorList>
            <person name="Parkhill J."/>
            <person name="Achtman M."/>
            <person name="James K.D."/>
            <person name="Bentley S.D."/>
            <person name="Churcher C.M."/>
            <person name="Klee S.R."/>
            <person name="Morelli G."/>
            <person name="Basham D."/>
            <person name="Brown D."/>
            <person name="Chillingworth T."/>
            <person name="Davies R.M."/>
            <person name="Davis P."/>
            <person name="Devlin K."/>
            <person name="Feltwell T."/>
            <person name="Hamlin N."/>
            <person name="Holroyd S."/>
            <person name="Jagels K."/>
            <person name="Leather S."/>
            <person name="Moule S."/>
            <person name="Mungall K.L."/>
            <person name="Quail M.A."/>
            <person name="Rajandream M.A."/>
            <person name="Rutherford K.M."/>
            <person name="Simmonds M."/>
            <person name="Skelton J."/>
            <person name="Whitehead S."/>
            <person name="Spratt B.G."/>
            <person name="Barrell B.G."/>
        </authorList>
    </citation>
    <scope>NUCLEOTIDE SEQUENCE [LARGE SCALE GENOMIC DNA]</scope>
    <source>
        <strain>DSM 15465 / Z2491</strain>
    </source>
</reference>
<name>HLDD_NEIMA</name>
<evidence type="ECO:0000255" key="1">
    <source>
        <dbReference type="HAMAP-Rule" id="MF_01601"/>
    </source>
</evidence>
<proteinExistence type="inferred from homology"/>